<reference key="1">
    <citation type="journal article" date="2005" name="Nature">
        <title>The genome of the social amoeba Dictyostelium discoideum.</title>
        <authorList>
            <person name="Eichinger L."/>
            <person name="Pachebat J.A."/>
            <person name="Gloeckner G."/>
            <person name="Rajandream M.A."/>
            <person name="Sucgang R."/>
            <person name="Berriman M."/>
            <person name="Song J."/>
            <person name="Olsen R."/>
            <person name="Szafranski K."/>
            <person name="Xu Q."/>
            <person name="Tunggal B."/>
            <person name="Kummerfeld S."/>
            <person name="Madera M."/>
            <person name="Konfortov B.A."/>
            <person name="Rivero F."/>
            <person name="Bankier A.T."/>
            <person name="Lehmann R."/>
            <person name="Hamlin N."/>
            <person name="Davies R."/>
            <person name="Gaudet P."/>
            <person name="Fey P."/>
            <person name="Pilcher K."/>
            <person name="Chen G."/>
            <person name="Saunders D."/>
            <person name="Sodergren E.J."/>
            <person name="Davis P."/>
            <person name="Kerhornou A."/>
            <person name="Nie X."/>
            <person name="Hall N."/>
            <person name="Anjard C."/>
            <person name="Hemphill L."/>
            <person name="Bason N."/>
            <person name="Farbrother P."/>
            <person name="Desany B."/>
            <person name="Just E."/>
            <person name="Morio T."/>
            <person name="Rost R."/>
            <person name="Churcher C.M."/>
            <person name="Cooper J."/>
            <person name="Haydock S."/>
            <person name="van Driessche N."/>
            <person name="Cronin A."/>
            <person name="Goodhead I."/>
            <person name="Muzny D.M."/>
            <person name="Mourier T."/>
            <person name="Pain A."/>
            <person name="Lu M."/>
            <person name="Harper D."/>
            <person name="Lindsay R."/>
            <person name="Hauser H."/>
            <person name="James K.D."/>
            <person name="Quiles M."/>
            <person name="Madan Babu M."/>
            <person name="Saito T."/>
            <person name="Buchrieser C."/>
            <person name="Wardroper A."/>
            <person name="Felder M."/>
            <person name="Thangavelu M."/>
            <person name="Johnson D."/>
            <person name="Knights A."/>
            <person name="Loulseged H."/>
            <person name="Mungall K.L."/>
            <person name="Oliver K."/>
            <person name="Price C."/>
            <person name="Quail M.A."/>
            <person name="Urushihara H."/>
            <person name="Hernandez J."/>
            <person name="Rabbinowitsch E."/>
            <person name="Steffen D."/>
            <person name="Sanders M."/>
            <person name="Ma J."/>
            <person name="Kohara Y."/>
            <person name="Sharp S."/>
            <person name="Simmonds M.N."/>
            <person name="Spiegler S."/>
            <person name="Tivey A."/>
            <person name="Sugano S."/>
            <person name="White B."/>
            <person name="Walker D."/>
            <person name="Woodward J.R."/>
            <person name="Winckler T."/>
            <person name="Tanaka Y."/>
            <person name="Shaulsky G."/>
            <person name="Schleicher M."/>
            <person name="Weinstock G.M."/>
            <person name="Rosenthal A."/>
            <person name="Cox E.C."/>
            <person name="Chisholm R.L."/>
            <person name="Gibbs R.A."/>
            <person name="Loomis W.F."/>
            <person name="Platzer M."/>
            <person name="Kay R.R."/>
            <person name="Williams J.G."/>
            <person name="Dear P.H."/>
            <person name="Noegel A.A."/>
            <person name="Barrell B.G."/>
            <person name="Kuspa A."/>
        </authorList>
    </citation>
    <scope>NUCLEOTIDE SEQUENCE [LARGE SCALE GENOMIC DNA]</scope>
    <source>
        <strain>AX4</strain>
    </source>
</reference>
<name>Y1610_DICDI</name>
<gene>
    <name type="ORF">DDB_G0281251</name>
</gene>
<accession>Q54U64</accession>
<dbReference type="EMBL" id="AAFI02000040">
    <property type="protein sequence ID" value="EAL66922.1"/>
    <property type="molecule type" value="Genomic_DNA"/>
</dbReference>
<dbReference type="RefSeq" id="XP_640912.1">
    <property type="nucleotide sequence ID" value="XM_635820.1"/>
</dbReference>
<dbReference type="SMR" id="Q54U64"/>
<dbReference type="PaxDb" id="44689-DDB0231610"/>
<dbReference type="EnsemblProtists" id="EAL66922">
    <property type="protein sequence ID" value="EAL66922"/>
    <property type="gene ID" value="DDB_G0281251"/>
</dbReference>
<dbReference type="GeneID" id="8622974"/>
<dbReference type="KEGG" id="ddi:DDB_G0281251"/>
<dbReference type="dictyBase" id="DDB_G0281251"/>
<dbReference type="VEuPathDB" id="AmoebaDB:DDB_G0281251"/>
<dbReference type="HOGENOM" id="CLU_247362_0_0_1"/>
<dbReference type="InParanoid" id="Q54U64"/>
<dbReference type="PRO" id="PR:Q54U64"/>
<dbReference type="Proteomes" id="UP000002195">
    <property type="component" value="Chromosome 3"/>
</dbReference>
<dbReference type="GO" id="GO:0016592">
    <property type="term" value="C:mediator complex"/>
    <property type="evidence" value="ECO:0000318"/>
    <property type="project" value="GO_Central"/>
</dbReference>
<dbReference type="GO" id="GO:0003713">
    <property type="term" value="F:transcription coactivator activity"/>
    <property type="evidence" value="ECO:0000318"/>
    <property type="project" value="GO_Central"/>
</dbReference>
<dbReference type="GO" id="GO:0045944">
    <property type="term" value="P:positive regulation of transcription by RNA polymerase II"/>
    <property type="evidence" value="ECO:0000318"/>
    <property type="project" value="GO_Central"/>
</dbReference>
<dbReference type="PANTHER" id="PTHR36911:SF3">
    <property type="entry name" value="GATA ZINC FINGER DOMAIN-CONTAINING PROTEIN 4-RELATED"/>
    <property type="match status" value="1"/>
</dbReference>
<dbReference type="PANTHER" id="PTHR36911">
    <property type="entry name" value="LIM ZINC-BINDING DOMAIN-CONTAINING PROTEIN-RELATED"/>
    <property type="match status" value="1"/>
</dbReference>
<feature type="chain" id="PRO_0000352394" description="Putative uncharacterized protein DDB_G0281251">
    <location>
        <begin position="1"/>
        <end position="1529"/>
    </location>
</feature>
<feature type="region of interest" description="Disordered" evidence="1">
    <location>
        <begin position="1"/>
        <end position="85"/>
    </location>
</feature>
<feature type="region of interest" description="Disordered" evidence="1">
    <location>
        <begin position="335"/>
        <end position="371"/>
    </location>
</feature>
<feature type="region of interest" description="Disordered" evidence="1">
    <location>
        <begin position="660"/>
        <end position="694"/>
    </location>
</feature>
<feature type="region of interest" description="Disordered" evidence="1">
    <location>
        <begin position="798"/>
        <end position="843"/>
    </location>
</feature>
<feature type="region of interest" description="Disordered" evidence="1">
    <location>
        <begin position="1016"/>
        <end position="1035"/>
    </location>
</feature>
<feature type="region of interest" description="Disordered" evidence="1">
    <location>
        <begin position="1334"/>
        <end position="1364"/>
    </location>
</feature>
<feature type="region of interest" description="Disordered" evidence="1">
    <location>
        <begin position="1454"/>
        <end position="1497"/>
    </location>
</feature>
<feature type="compositionally biased region" description="Low complexity" evidence="1">
    <location>
        <begin position="1"/>
        <end position="11"/>
    </location>
</feature>
<feature type="compositionally biased region" description="Polar residues" evidence="1">
    <location>
        <begin position="24"/>
        <end position="42"/>
    </location>
</feature>
<feature type="compositionally biased region" description="Low complexity" evidence="1">
    <location>
        <begin position="51"/>
        <end position="79"/>
    </location>
</feature>
<feature type="compositionally biased region" description="Low complexity" evidence="1">
    <location>
        <begin position="810"/>
        <end position="833"/>
    </location>
</feature>
<feature type="compositionally biased region" description="Polar residues" evidence="1">
    <location>
        <begin position="834"/>
        <end position="843"/>
    </location>
</feature>
<feature type="compositionally biased region" description="Polar residues" evidence="1">
    <location>
        <begin position="1016"/>
        <end position="1027"/>
    </location>
</feature>
<feature type="compositionally biased region" description="Low complexity" evidence="1">
    <location>
        <begin position="1454"/>
        <end position="1494"/>
    </location>
</feature>
<keyword id="KW-1185">Reference proteome</keyword>
<evidence type="ECO:0000256" key="1">
    <source>
        <dbReference type="SAM" id="MobiDB-lite"/>
    </source>
</evidence>
<organism>
    <name type="scientific">Dictyostelium discoideum</name>
    <name type="common">Social amoeba</name>
    <dbReference type="NCBI Taxonomy" id="44689"/>
    <lineage>
        <taxon>Eukaryota</taxon>
        <taxon>Amoebozoa</taxon>
        <taxon>Evosea</taxon>
        <taxon>Eumycetozoa</taxon>
        <taxon>Dictyostelia</taxon>
        <taxon>Dictyosteliales</taxon>
        <taxon>Dictyosteliaceae</taxon>
        <taxon>Dictyostelium</taxon>
    </lineage>
</organism>
<sequence>MDKNNNNNNSNGGHENLFKDLQNQKRVQNPSFSSGQSRTVPSISARGVAPISSSSSSSSISTTNNTTTTTTSGTGSTSSPVSKGVPLIPIGASRFKQQPSTDVWRSARGQQLSESLWSSFKQALQNSQNSQQSLSQSLSQSHSTNSEINNILLEFVKHYNSEYDKWNVEMGVDYANTKVYGIKLYCTPVLDIQTTLYLTRQLCSYVLNLSKALTDDNLDIPDGLHFICLINILSRSPLNSTLLHQENALAHPFQAARLASYKLSSFRDKNNPSFTKWWPYLKVLLANCCQIATNFVHDKQNLSFNSLRYGNVNNNNNSNNNNNIVNSTSLSSGSLLSNGGGISTSEPEISPSTSPLTGTTPTSPSSSWSSSSITNHQIQHQILMQQQQQQQAQQQHTQQYFNTIGQSSSYSYTNVINGVSTNNSTITATTTSNFLIQHIFKLGTISILMDSLQFFNDFFKTLQPKDSEDSFRLLIIDTLGILISGNGGLTTTTTTTTTTTTTTATSTNTTPNTIINNTTINNSGLTNSINNNNGGNNNLNKLKEPGNEIKTIINCIGMKAYIKTSKKVTSLQNEFQFQLHVIRVIKELISNNLNNAKYFNSHRGFEKIQEVILWVTQCFKPTDSHTFTDESCLDFDTSMPAQELSALLIGATSSNSSNNLPNLTNSISSPSHSSSSSSSTTTNINNSNNNTATATTTTSNVIIPPTMYDSLNSVLNSLKYTTYSEKSSSLIKSPPIIVKRSKVVQLSQLFQVLHSFSFTLVPFSKIQTNSSSSSGNLNYNIYSSSSASFINNNNNNNNCNISSPTNQSVNNNNNNNNNNNNNNNNNNNNNNNNVLPRSNSSYSIFRRGDSLNTIIDINQDNNNSNSNSNNSSTLDILNNSQDTIVDNNNGSNIDFEATITTNTTTVVTATVNLTNNNNNNNNNNNNMIDGNTEVTGGSAHNSWSSYTNINEQFQQLSLTSSTTATGSSPTSPTAFQYQSKPIDKMFVNTLLIETIFEKLFSQLNLSALNENHSTTSSLPISQNLSDDSSNTNTNNNNTSFGKIYISDNLQQNPNTDKSLSCGKIFNKIKNSTPELQLQIIEYLIKLVIENPYCLPILRRFNLWELIFSDNFYYSSPQATLNDDDIEYLLNSTTTTTTSSSTNISEEQLKKRKLYLFNGLRLGCLGLIQFFSTFNNRDNFEEICIILTEMRKSLLKSPASVIELCQLLINITKSNPQGTIQSLIKLRIFQQIPQMIQVLFKYEQASNSQFGLLHKKARNIIFSYLGQLIVHEELSYHAVVEKELIDVLFLLLRKVETKTFSITQIFFLMKLNVSSSSPSVTTLLSSSSQVLNSYQQQQQQPQQQSSQPQQQSSQPQQIPQSQLQQQNQTQSLQSSSLSSTSLLLTSQHQQPSTSLLSTSQFSSSSSLLQQQQQQQQQQQQQQQQQQQQQQQQQQQQPQLLQQTQQQQQQQQQQQQQQVQTPSSPQTLASLLGNSSSNTLTSSSSTLSLNESSTLSRLPTSNNLSELYRTYISELSMIKEETSCTYDFKFD</sequence>
<protein>
    <recommendedName>
        <fullName>Putative uncharacterized protein DDB_G0281251</fullName>
    </recommendedName>
</protein>
<proteinExistence type="predicted"/>